<dbReference type="EMBL" id="CR858643">
    <property type="protein sequence ID" value="CAH90859.1"/>
    <property type="molecule type" value="mRNA"/>
</dbReference>
<dbReference type="RefSeq" id="NP_001125491.1">
    <property type="nucleotide sequence ID" value="NM_001132019.1"/>
</dbReference>
<dbReference type="SMR" id="Q5RBK1"/>
<dbReference type="STRING" id="9601.ENSPPYP00000000924"/>
<dbReference type="GeneID" id="100172400"/>
<dbReference type="KEGG" id="pon:100172400"/>
<dbReference type="CTD" id="6232"/>
<dbReference type="eggNOG" id="KOG1779">
    <property type="taxonomic scope" value="Eukaryota"/>
</dbReference>
<dbReference type="InParanoid" id="Q5RBK1"/>
<dbReference type="OrthoDB" id="9523474at2759"/>
<dbReference type="Proteomes" id="UP000001595">
    <property type="component" value="Unplaced"/>
</dbReference>
<dbReference type="GO" id="GO:0005737">
    <property type="term" value="C:cytoplasm"/>
    <property type="evidence" value="ECO:0007669"/>
    <property type="project" value="UniProtKB-SubCell"/>
</dbReference>
<dbReference type="GO" id="GO:0005730">
    <property type="term" value="C:nucleolus"/>
    <property type="evidence" value="ECO:0007669"/>
    <property type="project" value="UniProtKB-SubCell"/>
</dbReference>
<dbReference type="GO" id="GO:0005840">
    <property type="term" value="C:ribosome"/>
    <property type="evidence" value="ECO:0007669"/>
    <property type="project" value="UniProtKB-KW"/>
</dbReference>
<dbReference type="GO" id="GO:0032040">
    <property type="term" value="C:small-subunit processome"/>
    <property type="evidence" value="ECO:0000250"/>
    <property type="project" value="UniProtKB"/>
</dbReference>
<dbReference type="GO" id="GO:0003735">
    <property type="term" value="F:structural constituent of ribosome"/>
    <property type="evidence" value="ECO:0007669"/>
    <property type="project" value="InterPro"/>
</dbReference>
<dbReference type="GO" id="GO:0008270">
    <property type="term" value="F:zinc ion binding"/>
    <property type="evidence" value="ECO:0007669"/>
    <property type="project" value="UniProtKB-KW"/>
</dbReference>
<dbReference type="GO" id="GO:0042274">
    <property type="term" value="P:ribosomal small subunit biogenesis"/>
    <property type="evidence" value="ECO:0000250"/>
    <property type="project" value="UniProtKB"/>
</dbReference>
<dbReference type="GO" id="GO:0006364">
    <property type="term" value="P:rRNA processing"/>
    <property type="evidence" value="ECO:0000250"/>
    <property type="project" value="UniProtKB"/>
</dbReference>
<dbReference type="GO" id="GO:0006412">
    <property type="term" value="P:translation"/>
    <property type="evidence" value="ECO:0007669"/>
    <property type="project" value="InterPro"/>
</dbReference>
<dbReference type="FunFam" id="2.20.25.100:FF:000001">
    <property type="entry name" value="40S ribosomal protein S27"/>
    <property type="match status" value="1"/>
</dbReference>
<dbReference type="Gene3D" id="2.20.25.100">
    <property type="entry name" value="Zn-binding ribosomal proteins"/>
    <property type="match status" value="1"/>
</dbReference>
<dbReference type="HAMAP" id="MF_00371">
    <property type="entry name" value="Ribosomal_eS27"/>
    <property type="match status" value="1"/>
</dbReference>
<dbReference type="InterPro" id="IPR000592">
    <property type="entry name" value="Ribosomal_eS27"/>
</dbReference>
<dbReference type="InterPro" id="IPR023407">
    <property type="entry name" value="Ribosomal_eS27_Zn-bd_dom_sf"/>
</dbReference>
<dbReference type="InterPro" id="IPR011332">
    <property type="entry name" value="Ribosomal_zn-bd"/>
</dbReference>
<dbReference type="PANTHER" id="PTHR11594">
    <property type="entry name" value="40S RIBOSOMAL PROTEIN S27"/>
    <property type="match status" value="1"/>
</dbReference>
<dbReference type="Pfam" id="PF01667">
    <property type="entry name" value="Ribosomal_S27e"/>
    <property type="match status" value="1"/>
</dbReference>
<dbReference type="SUPFAM" id="SSF57829">
    <property type="entry name" value="Zn-binding ribosomal proteins"/>
    <property type="match status" value="1"/>
</dbReference>
<dbReference type="PROSITE" id="PS01168">
    <property type="entry name" value="RIBOSOMAL_S27E"/>
    <property type="match status" value="1"/>
</dbReference>
<reference key="1">
    <citation type="submission" date="2004-11" db="EMBL/GenBank/DDBJ databases">
        <authorList>
            <consortium name="The German cDNA consortium"/>
        </authorList>
    </citation>
    <scope>NUCLEOTIDE SEQUENCE [LARGE SCALE MRNA]</scope>
    <source>
        <tissue>Kidney</tissue>
    </source>
</reference>
<protein>
    <recommendedName>
        <fullName evidence="4">Small ribosomal subunit protein eS27</fullName>
    </recommendedName>
    <alternativeName>
        <fullName>40S ribosomal protein S27</fullName>
    </alternativeName>
</protein>
<organism>
    <name type="scientific">Pongo abelii</name>
    <name type="common">Sumatran orangutan</name>
    <name type="synonym">Pongo pygmaeus abelii</name>
    <dbReference type="NCBI Taxonomy" id="9601"/>
    <lineage>
        <taxon>Eukaryota</taxon>
        <taxon>Metazoa</taxon>
        <taxon>Chordata</taxon>
        <taxon>Craniata</taxon>
        <taxon>Vertebrata</taxon>
        <taxon>Euteleostomi</taxon>
        <taxon>Mammalia</taxon>
        <taxon>Eutheria</taxon>
        <taxon>Euarchontoglires</taxon>
        <taxon>Primates</taxon>
        <taxon>Haplorrhini</taxon>
        <taxon>Catarrhini</taxon>
        <taxon>Hominidae</taxon>
        <taxon>Pongo</taxon>
    </lineage>
</organism>
<accession>Q5RBK1</accession>
<gene>
    <name type="primary">RPS27</name>
</gene>
<feature type="chain" id="PRO_0000230306" description="Small ribosomal subunit protein eS27">
    <location>
        <begin position="1"/>
        <end position="84"/>
    </location>
</feature>
<feature type="zinc finger region" description="C4-type" evidence="2">
    <location>
        <begin position="38"/>
        <end position="60"/>
    </location>
</feature>
<feature type="region of interest" description="Disordered" evidence="3">
    <location>
        <begin position="1"/>
        <end position="25"/>
    </location>
</feature>
<feature type="compositionally biased region" description="Basic and acidic residues" evidence="3">
    <location>
        <begin position="1"/>
        <end position="16"/>
    </location>
</feature>
<feature type="modified residue" description="Phosphoserine" evidence="1">
    <location>
        <position position="11"/>
    </location>
</feature>
<proteinExistence type="inferred from homology"/>
<comment type="function">
    <text evidence="1">Component of the small ribosomal subunit. The ribosome is a large ribonucleoprotein complex responsible for the synthesis of proteins in the cell. Required for proper rRNA processing and maturation of 18S rRNAs. Part of the small subunit (SSU) processome, first precursor of the small eukaryotic ribosomal subunit. During the assembly of the SSU processome in the nucleolus, many ribosome biogenesis factors, an RNA chaperone and ribosomal proteins associate with the nascent pre-rRNA and work in concert to generate RNA folding, modifications, rearrangements and cleavage as well as targeted degradation of pre-ribosomal RNA by the RNA exosome.</text>
</comment>
<comment type="cofactor">
    <cofactor evidence="4">
        <name>Zn(2+)</name>
        <dbReference type="ChEBI" id="CHEBI:29105"/>
    </cofactor>
    <text evidence="4">Binds 1 zinc ion per subunit.</text>
</comment>
<comment type="subunit">
    <text evidence="1">Component of the small ribosomal subunit. Part of the small subunit (SSU) processome, composed of more than 70 proteins and the RNA chaperone small nucleolar RNA (snoRNA) U3.</text>
</comment>
<comment type="subcellular location">
    <subcellularLocation>
        <location evidence="1">Cytoplasm</location>
    </subcellularLocation>
    <subcellularLocation>
        <location evidence="1">Nucleus</location>
        <location evidence="1">Nucleolus</location>
    </subcellularLocation>
</comment>
<comment type="similarity">
    <text evidence="4">Belongs to the eukaryotic ribosomal protein eS27 family.</text>
</comment>
<name>RS27_PONAB</name>
<sequence length="84" mass="9445">MPLAKDPLHPSPEEEKRKHKKKRLVQSPNSYFMDVKCPGCYKITTVFSHAQTVVLCVGCSTVLCQPTGGKARLTEGCSFRRKQH</sequence>
<evidence type="ECO:0000250" key="1">
    <source>
        <dbReference type="UniProtKB" id="P42677"/>
    </source>
</evidence>
<evidence type="ECO:0000255" key="2"/>
<evidence type="ECO:0000256" key="3">
    <source>
        <dbReference type="SAM" id="MobiDB-lite"/>
    </source>
</evidence>
<evidence type="ECO:0000305" key="4"/>
<keyword id="KW-0963">Cytoplasm</keyword>
<keyword id="KW-0479">Metal-binding</keyword>
<keyword id="KW-0539">Nucleus</keyword>
<keyword id="KW-0597">Phosphoprotein</keyword>
<keyword id="KW-1185">Reference proteome</keyword>
<keyword id="KW-0687">Ribonucleoprotein</keyword>
<keyword id="KW-0689">Ribosomal protein</keyword>
<keyword id="KW-0862">Zinc</keyword>
<keyword id="KW-0863">Zinc-finger</keyword>